<protein>
    <recommendedName>
        <fullName evidence="1">DNA replication and repair protein RecF</fullName>
    </recommendedName>
</protein>
<gene>
    <name evidence="1" type="primary">recF</name>
    <name type="ordered locus">cgR_0004</name>
</gene>
<reference key="1">
    <citation type="journal article" date="2007" name="Microbiology">
        <title>Comparative analysis of the Corynebacterium glutamicum group and complete genome sequence of strain R.</title>
        <authorList>
            <person name="Yukawa H."/>
            <person name="Omumasaba C.A."/>
            <person name="Nonaka H."/>
            <person name="Kos P."/>
            <person name="Okai N."/>
            <person name="Suzuki N."/>
            <person name="Suda M."/>
            <person name="Tsuge Y."/>
            <person name="Watanabe J."/>
            <person name="Ikeda Y."/>
            <person name="Vertes A.A."/>
            <person name="Inui M."/>
        </authorList>
    </citation>
    <scope>NUCLEOTIDE SEQUENCE [LARGE SCALE GENOMIC DNA]</scope>
    <source>
        <strain>R</strain>
    </source>
</reference>
<feature type="chain" id="PRO_1000048517" description="DNA replication and repair protein RecF">
    <location>
        <begin position="1"/>
        <end position="394"/>
    </location>
</feature>
<feature type="binding site" evidence="1">
    <location>
        <begin position="30"/>
        <end position="37"/>
    </location>
    <ligand>
        <name>ATP</name>
        <dbReference type="ChEBI" id="CHEBI:30616"/>
    </ligand>
</feature>
<organism>
    <name type="scientific">Corynebacterium glutamicum (strain R)</name>
    <dbReference type="NCBI Taxonomy" id="340322"/>
    <lineage>
        <taxon>Bacteria</taxon>
        <taxon>Bacillati</taxon>
        <taxon>Actinomycetota</taxon>
        <taxon>Actinomycetes</taxon>
        <taxon>Mycobacteriales</taxon>
        <taxon>Corynebacteriaceae</taxon>
        <taxon>Corynebacterium</taxon>
    </lineage>
</organism>
<keyword id="KW-0067">ATP-binding</keyword>
<keyword id="KW-0963">Cytoplasm</keyword>
<keyword id="KW-0227">DNA damage</keyword>
<keyword id="KW-0234">DNA repair</keyword>
<keyword id="KW-0235">DNA replication</keyword>
<keyword id="KW-0238">DNA-binding</keyword>
<keyword id="KW-0547">Nucleotide-binding</keyword>
<keyword id="KW-0742">SOS response</keyword>
<dbReference type="EMBL" id="AP009044">
    <property type="protein sequence ID" value="BAF52965.1"/>
    <property type="molecule type" value="Genomic_DNA"/>
</dbReference>
<dbReference type="RefSeq" id="WP_011896345.1">
    <property type="nucleotide sequence ID" value="NC_009342.1"/>
</dbReference>
<dbReference type="SMR" id="A4Q9S2"/>
<dbReference type="KEGG" id="cgt:cgR_0004"/>
<dbReference type="HOGENOM" id="CLU_040267_1_1_11"/>
<dbReference type="PhylomeDB" id="A4Q9S2"/>
<dbReference type="Proteomes" id="UP000006698">
    <property type="component" value="Chromosome"/>
</dbReference>
<dbReference type="GO" id="GO:0005737">
    <property type="term" value="C:cytoplasm"/>
    <property type="evidence" value="ECO:0007669"/>
    <property type="project" value="UniProtKB-SubCell"/>
</dbReference>
<dbReference type="GO" id="GO:0005524">
    <property type="term" value="F:ATP binding"/>
    <property type="evidence" value="ECO:0007669"/>
    <property type="project" value="UniProtKB-UniRule"/>
</dbReference>
<dbReference type="GO" id="GO:0003697">
    <property type="term" value="F:single-stranded DNA binding"/>
    <property type="evidence" value="ECO:0007669"/>
    <property type="project" value="UniProtKB-UniRule"/>
</dbReference>
<dbReference type="GO" id="GO:0006260">
    <property type="term" value="P:DNA replication"/>
    <property type="evidence" value="ECO:0007669"/>
    <property type="project" value="UniProtKB-UniRule"/>
</dbReference>
<dbReference type="GO" id="GO:0000731">
    <property type="term" value="P:DNA synthesis involved in DNA repair"/>
    <property type="evidence" value="ECO:0007669"/>
    <property type="project" value="TreeGrafter"/>
</dbReference>
<dbReference type="GO" id="GO:0006302">
    <property type="term" value="P:double-strand break repair"/>
    <property type="evidence" value="ECO:0007669"/>
    <property type="project" value="TreeGrafter"/>
</dbReference>
<dbReference type="GO" id="GO:0009432">
    <property type="term" value="P:SOS response"/>
    <property type="evidence" value="ECO:0007669"/>
    <property type="project" value="UniProtKB-UniRule"/>
</dbReference>
<dbReference type="CDD" id="cd03242">
    <property type="entry name" value="ABC_RecF"/>
    <property type="match status" value="1"/>
</dbReference>
<dbReference type="Gene3D" id="3.40.50.300">
    <property type="entry name" value="P-loop containing nucleotide triphosphate hydrolases"/>
    <property type="match status" value="1"/>
</dbReference>
<dbReference type="Gene3D" id="1.20.1050.90">
    <property type="entry name" value="RecF/RecN/SMC, N-terminal domain"/>
    <property type="match status" value="1"/>
</dbReference>
<dbReference type="HAMAP" id="MF_00365">
    <property type="entry name" value="RecF"/>
    <property type="match status" value="1"/>
</dbReference>
<dbReference type="InterPro" id="IPR001238">
    <property type="entry name" value="DNA-binding_RecF"/>
</dbReference>
<dbReference type="InterPro" id="IPR018078">
    <property type="entry name" value="DNA-binding_RecF_CS"/>
</dbReference>
<dbReference type="InterPro" id="IPR027417">
    <property type="entry name" value="P-loop_NTPase"/>
</dbReference>
<dbReference type="InterPro" id="IPR003395">
    <property type="entry name" value="RecF/RecN/SMC_N"/>
</dbReference>
<dbReference type="InterPro" id="IPR042174">
    <property type="entry name" value="RecF_2"/>
</dbReference>
<dbReference type="NCBIfam" id="TIGR00611">
    <property type="entry name" value="recf"/>
    <property type="match status" value="1"/>
</dbReference>
<dbReference type="PANTHER" id="PTHR32182">
    <property type="entry name" value="DNA REPLICATION AND REPAIR PROTEIN RECF"/>
    <property type="match status" value="1"/>
</dbReference>
<dbReference type="PANTHER" id="PTHR32182:SF0">
    <property type="entry name" value="DNA REPLICATION AND REPAIR PROTEIN RECF"/>
    <property type="match status" value="1"/>
</dbReference>
<dbReference type="Pfam" id="PF02463">
    <property type="entry name" value="SMC_N"/>
    <property type="match status" value="1"/>
</dbReference>
<dbReference type="SUPFAM" id="SSF52540">
    <property type="entry name" value="P-loop containing nucleoside triphosphate hydrolases"/>
    <property type="match status" value="1"/>
</dbReference>
<dbReference type="PROSITE" id="PS00617">
    <property type="entry name" value="RECF_1"/>
    <property type="match status" value="1"/>
</dbReference>
<dbReference type="PROSITE" id="PS00618">
    <property type="entry name" value="RECF_2"/>
    <property type="match status" value="1"/>
</dbReference>
<evidence type="ECO:0000255" key="1">
    <source>
        <dbReference type="HAMAP-Rule" id="MF_00365"/>
    </source>
</evidence>
<accession>A4Q9S2</accession>
<proteinExistence type="inferred from homology"/>
<comment type="function">
    <text evidence="1">The RecF protein is involved in DNA metabolism; it is required for DNA replication and normal SOS inducibility. RecF binds preferentially to single-stranded, linear DNA. It also seems to bind ATP.</text>
</comment>
<comment type="subcellular location">
    <subcellularLocation>
        <location evidence="1">Cytoplasm</location>
    </subcellularLocation>
</comment>
<comment type="similarity">
    <text evidence="1">Belongs to the RecF family.</text>
</comment>
<sequence>MHIRSLELRDYRSWPELKVDLEPGITVFIGRNGFGKTNIVEAIGYLAHLSSHRVSSDAPLVRAHAENARVSAVAVNQGRELAAHLLIKPHAANQASLNRTKVRTPRELLGVVKTVLFAPEDLALVKGEPAERRRYLDDIIATRQPRMAGVKADYDKVLKQRNALLKTATIALRRGYGTEEGAAALSTLDTWDGQLARLGAEVMAARFALLNELGPKIYEAYTTIAPESRPAAVNYKTTIDQGLSQFSEFDAGIIEATLLTELAAKRQREIERGSSLVGPHRDDVDLMLGDQPAKGFASHGETWSFALSLRIAEFNLLKSDDTDPILILDDVFSELDAGRRQKLVGIAQEVEQVLITAAVHDDLPENLKKVLTAQHTVTVQDTDTGRISLLDVQP</sequence>
<name>RECF_CORGB</name>